<organism>
    <name type="scientific">Cytophaga hutchinsonii (strain ATCC 33406 / DSM 1761 / CIP 103989 / NBRC 15051 / NCIMB 9469 / D465)</name>
    <dbReference type="NCBI Taxonomy" id="269798"/>
    <lineage>
        <taxon>Bacteria</taxon>
        <taxon>Pseudomonadati</taxon>
        <taxon>Bacteroidota</taxon>
        <taxon>Cytophagia</taxon>
        <taxon>Cytophagales</taxon>
        <taxon>Cytophagaceae</taxon>
        <taxon>Cytophaga</taxon>
    </lineage>
</organism>
<proteinExistence type="inferred from homology"/>
<sequence>MLGILAKLFGTKSGRDIKKLQPLVERINEEFQKLHALDDNQLRAQTDKIKGIIDADLSGIDKQIKEHHDKIAANPDLSIDEKEVVFQAIDKLELERNKELEKVLEKVLPQAFAVVKDTARRWKENGKLTVTATPMDIELASRKKNVQIIGSTAEWSSKWLAAGTEVTWEMQHFDVQLIGGMVLHHGKISEMGTGEGKTLVATLPAYLNALARRGVHVVTVNDYLAKRDSEWMAPLFEFHGISVDCIDKYQPNSEERRKAYRADITYGTNNEFGFDYLRDNMATDKDDLVQRGHHYAMVDEVDSVLIDDARTPLIISGPVPKGDQHEFAELKPRIQRVLEEQKKLINTYLVEAKRYIAAGKEKEAGLELLRAHRGYPGYKPLIKQLSETGIKSILQKTENEYMAENNKRMPEVDLPLYFVIDEKHNQVDFTEKGVDFITGEQEDPTLFVLPDIGSELAKIEKDKSISDQERMEQTEKLLSDYSIKQERIHTLQQLLKAYTLFEKDTDYVIMDGKVKIVDEQTGRIMDGRRYSDGLHQALEAKENVRVEEATQTYATITLQNYFRMYHKLSGMTGTAETEEAEFQQIYNLDVVVVPTNRSIARLDEQDKVYKTTREKYNAVADEIVELTEKGRPVLVGTTSVDISELLSRMLKMRNIKHQVLNAKLHAKEADVVAEAGKPGTVTIATNMAGRGTDIKLTAEAKASGGLAIIGTERHESRRVDRQLRGRAGRQGDPGSSQFFVSLEDNLMRLFGSDRIAKFMDRMGYKEGEVIQHSMISNSIERAQKKVEENNFGQRKRLLEYDNVMNSQRVVIYKRRKNALYGERLKLDILNMIFDLCEDMVFGAYTTKNYDNFKLRSISVFGVIPDITEEVFNKATAETLVKSFYEEVLAHYEQKIKFVKEKTQPTFNELQLTRGETIENIVIPFTDGKRNINIIAPLKELAQSDSRALEQAIERYITLAVIDMHWKDHLREMDELKQSVQNAAYEQKDPLLVYKFEGFELFKKFVYTVNADIVSFLFKADIPKQDTVPVRELKQQPVQQPKYRETKDEAGSAFGGGNANQQVEEAVAPPKAEPLRSQKIANRNDKVSVQYMDGSVKRDIKYKAVEDDLLSNKCVLIEE</sequence>
<comment type="function">
    <text evidence="1">Part of the Sec protein translocase complex. Interacts with the SecYEG preprotein conducting channel. Has a central role in coupling the hydrolysis of ATP to the transfer of proteins into and across the cell membrane, serving as an ATP-driven molecular motor driving the stepwise translocation of polypeptide chains across the membrane.</text>
</comment>
<comment type="catalytic activity">
    <reaction evidence="1">
        <text>ATP + H2O + cellular proteinSide 1 = ADP + phosphate + cellular proteinSide 2.</text>
        <dbReference type="EC" id="7.4.2.8"/>
    </reaction>
</comment>
<comment type="subunit">
    <text evidence="1">Monomer and homodimer. Part of the essential Sec protein translocation apparatus which comprises SecA, SecYEG and auxiliary proteins SecDF. Other proteins may also be involved.</text>
</comment>
<comment type="subcellular location">
    <subcellularLocation>
        <location evidence="1">Cell inner membrane</location>
        <topology evidence="1">Peripheral membrane protein</topology>
        <orientation evidence="1">Cytoplasmic side</orientation>
    </subcellularLocation>
    <subcellularLocation>
        <location evidence="1">Cytoplasm</location>
    </subcellularLocation>
    <text evidence="1">Distribution is 50-50.</text>
</comment>
<comment type="similarity">
    <text evidence="1">Belongs to the SecA family.</text>
</comment>
<evidence type="ECO:0000255" key="1">
    <source>
        <dbReference type="HAMAP-Rule" id="MF_01382"/>
    </source>
</evidence>
<evidence type="ECO:0000256" key="2">
    <source>
        <dbReference type="SAM" id="MobiDB-lite"/>
    </source>
</evidence>
<gene>
    <name evidence="1" type="primary">secA</name>
    <name type="ordered locus">CHU_0128</name>
</gene>
<dbReference type="EC" id="7.4.2.8" evidence="1"/>
<dbReference type="EMBL" id="CP000383">
    <property type="protein sequence ID" value="ABG57421.1"/>
    <property type="molecule type" value="Genomic_DNA"/>
</dbReference>
<dbReference type="RefSeq" id="WP_011583537.1">
    <property type="nucleotide sequence ID" value="NC_008255.1"/>
</dbReference>
<dbReference type="SMR" id="Q11YU5"/>
<dbReference type="STRING" id="269798.CHU_0128"/>
<dbReference type="KEGG" id="chu:CHU_0128"/>
<dbReference type="eggNOG" id="COG0653">
    <property type="taxonomic scope" value="Bacteria"/>
</dbReference>
<dbReference type="HOGENOM" id="CLU_005314_3_0_10"/>
<dbReference type="OrthoDB" id="9805579at2"/>
<dbReference type="Proteomes" id="UP000001822">
    <property type="component" value="Chromosome"/>
</dbReference>
<dbReference type="GO" id="GO:0031522">
    <property type="term" value="C:cell envelope Sec protein transport complex"/>
    <property type="evidence" value="ECO:0007669"/>
    <property type="project" value="TreeGrafter"/>
</dbReference>
<dbReference type="GO" id="GO:0005829">
    <property type="term" value="C:cytosol"/>
    <property type="evidence" value="ECO:0007669"/>
    <property type="project" value="TreeGrafter"/>
</dbReference>
<dbReference type="GO" id="GO:0005886">
    <property type="term" value="C:plasma membrane"/>
    <property type="evidence" value="ECO:0007669"/>
    <property type="project" value="UniProtKB-SubCell"/>
</dbReference>
<dbReference type="GO" id="GO:0005524">
    <property type="term" value="F:ATP binding"/>
    <property type="evidence" value="ECO:0007669"/>
    <property type="project" value="UniProtKB-UniRule"/>
</dbReference>
<dbReference type="GO" id="GO:0008564">
    <property type="term" value="F:protein-exporting ATPase activity"/>
    <property type="evidence" value="ECO:0007669"/>
    <property type="project" value="UniProtKB-EC"/>
</dbReference>
<dbReference type="GO" id="GO:0065002">
    <property type="term" value="P:intracellular protein transmembrane transport"/>
    <property type="evidence" value="ECO:0007669"/>
    <property type="project" value="UniProtKB-UniRule"/>
</dbReference>
<dbReference type="GO" id="GO:0017038">
    <property type="term" value="P:protein import"/>
    <property type="evidence" value="ECO:0007669"/>
    <property type="project" value="InterPro"/>
</dbReference>
<dbReference type="GO" id="GO:0006605">
    <property type="term" value="P:protein targeting"/>
    <property type="evidence" value="ECO:0007669"/>
    <property type="project" value="UniProtKB-UniRule"/>
</dbReference>
<dbReference type="GO" id="GO:0043952">
    <property type="term" value="P:protein transport by the Sec complex"/>
    <property type="evidence" value="ECO:0007669"/>
    <property type="project" value="TreeGrafter"/>
</dbReference>
<dbReference type="CDD" id="cd17928">
    <property type="entry name" value="DEXDc_SecA"/>
    <property type="match status" value="1"/>
</dbReference>
<dbReference type="CDD" id="cd18803">
    <property type="entry name" value="SF2_C_secA"/>
    <property type="match status" value="1"/>
</dbReference>
<dbReference type="FunFam" id="3.40.50.300:FF:000246">
    <property type="entry name" value="Preprotein translocase subunit SecA"/>
    <property type="match status" value="1"/>
</dbReference>
<dbReference type="FunFam" id="3.40.50.300:FF:000694">
    <property type="entry name" value="Preprotein translocase subunit SecA"/>
    <property type="match status" value="1"/>
</dbReference>
<dbReference type="Gene3D" id="1.10.3060.10">
    <property type="entry name" value="Helical scaffold and wing domains of SecA"/>
    <property type="match status" value="1"/>
</dbReference>
<dbReference type="Gene3D" id="3.40.50.300">
    <property type="entry name" value="P-loop containing nucleotide triphosphate hydrolases"/>
    <property type="match status" value="3"/>
</dbReference>
<dbReference type="Gene3D" id="3.90.1440.10">
    <property type="entry name" value="SecA, preprotein cross-linking domain"/>
    <property type="match status" value="1"/>
</dbReference>
<dbReference type="HAMAP" id="MF_01382">
    <property type="entry name" value="SecA"/>
    <property type="match status" value="1"/>
</dbReference>
<dbReference type="InterPro" id="IPR014001">
    <property type="entry name" value="Helicase_ATP-bd"/>
</dbReference>
<dbReference type="InterPro" id="IPR001650">
    <property type="entry name" value="Helicase_C-like"/>
</dbReference>
<dbReference type="InterPro" id="IPR027417">
    <property type="entry name" value="P-loop_NTPase"/>
</dbReference>
<dbReference type="InterPro" id="IPR000185">
    <property type="entry name" value="SecA"/>
</dbReference>
<dbReference type="InterPro" id="IPR020937">
    <property type="entry name" value="SecA_CS"/>
</dbReference>
<dbReference type="InterPro" id="IPR011115">
    <property type="entry name" value="SecA_DEAD"/>
</dbReference>
<dbReference type="InterPro" id="IPR014018">
    <property type="entry name" value="SecA_motor_DEAD"/>
</dbReference>
<dbReference type="InterPro" id="IPR011130">
    <property type="entry name" value="SecA_preprotein_X-link_dom"/>
</dbReference>
<dbReference type="InterPro" id="IPR044722">
    <property type="entry name" value="SecA_SF2_C"/>
</dbReference>
<dbReference type="InterPro" id="IPR011116">
    <property type="entry name" value="SecA_Wing/Scaffold"/>
</dbReference>
<dbReference type="InterPro" id="IPR036266">
    <property type="entry name" value="SecA_Wing/Scaffold_sf"/>
</dbReference>
<dbReference type="InterPro" id="IPR036670">
    <property type="entry name" value="SecA_X-link_sf"/>
</dbReference>
<dbReference type="NCBIfam" id="NF009536">
    <property type="entry name" value="PRK12901.1"/>
    <property type="match status" value="1"/>
</dbReference>
<dbReference type="NCBIfam" id="TIGR00963">
    <property type="entry name" value="secA"/>
    <property type="match status" value="1"/>
</dbReference>
<dbReference type="PANTHER" id="PTHR30612:SF0">
    <property type="entry name" value="CHLOROPLAST PROTEIN-TRANSPORTING ATPASE"/>
    <property type="match status" value="1"/>
</dbReference>
<dbReference type="PANTHER" id="PTHR30612">
    <property type="entry name" value="SECA INNER MEMBRANE COMPONENT OF SEC PROTEIN SECRETION SYSTEM"/>
    <property type="match status" value="1"/>
</dbReference>
<dbReference type="Pfam" id="PF21090">
    <property type="entry name" value="P-loop_SecA"/>
    <property type="match status" value="1"/>
</dbReference>
<dbReference type="Pfam" id="PF07517">
    <property type="entry name" value="SecA_DEAD"/>
    <property type="match status" value="1"/>
</dbReference>
<dbReference type="Pfam" id="PF01043">
    <property type="entry name" value="SecA_PP_bind"/>
    <property type="match status" value="1"/>
</dbReference>
<dbReference type="Pfam" id="PF07516">
    <property type="entry name" value="SecA_SW"/>
    <property type="match status" value="1"/>
</dbReference>
<dbReference type="PRINTS" id="PR00906">
    <property type="entry name" value="SECA"/>
</dbReference>
<dbReference type="SMART" id="SM00957">
    <property type="entry name" value="SecA_DEAD"/>
    <property type="match status" value="1"/>
</dbReference>
<dbReference type="SMART" id="SM00958">
    <property type="entry name" value="SecA_PP_bind"/>
    <property type="match status" value="1"/>
</dbReference>
<dbReference type="SUPFAM" id="SSF81886">
    <property type="entry name" value="Helical scaffold and wing domains of SecA"/>
    <property type="match status" value="1"/>
</dbReference>
<dbReference type="SUPFAM" id="SSF52540">
    <property type="entry name" value="P-loop containing nucleoside triphosphate hydrolases"/>
    <property type="match status" value="2"/>
</dbReference>
<dbReference type="SUPFAM" id="SSF81767">
    <property type="entry name" value="Pre-protein crosslinking domain of SecA"/>
    <property type="match status" value="1"/>
</dbReference>
<dbReference type="PROSITE" id="PS01312">
    <property type="entry name" value="SECA"/>
    <property type="match status" value="1"/>
</dbReference>
<dbReference type="PROSITE" id="PS51196">
    <property type="entry name" value="SECA_MOTOR_DEAD"/>
    <property type="match status" value="1"/>
</dbReference>
<feature type="chain" id="PRO_0000320788" description="Protein translocase subunit SecA">
    <location>
        <begin position="1"/>
        <end position="1118"/>
    </location>
</feature>
<feature type="region of interest" description="Disordered" evidence="2">
    <location>
        <begin position="1034"/>
        <end position="1056"/>
    </location>
</feature>
<feature type="binding site" evidence="1">
    <location>
        <position position="176"/>
    </location>
    <ligand>
        <name>ATP</name>
        <dbReference type="ChEBI" id="CHEBI:30616"/>
    </ligand>
</feature>
<feature type="binding site" evidence="1">
    <location>
        <begin position="194"/>
        <end position="198"/>
    </location>
    <ligand>
        <name>ATP</name>
        <dbReference type="ChEBI" id="CHEBI:30616"/>
    </ligand>
</feature>
<feature type="binding site" evidence="1">
    <location>
        <position position="693"/>
    </location>
    <ligand>
        <name>ATP</name>
        <dbReference type="ChEBI" id="CHEBI:30616"/>
    </ligand>
</feature>
<protein>
    <recommendedName>
        <fullName evidence="1">Protein translocase subunit SecA</fullName>
        <ecNumber evidence="1">7.4.2.8</ecNumber>
    </recommendedName>
</protein>
<keyword id="KW-0067">ATP-binding</keyword>
<keyword id="KW-0997">Cell inner membrane</keyword>
<keyword id="KW-1003">Cell membrane</keyword>
<keyword id="KW-0963">Cytoplasm</keyword>
<keyword id="KW-0472">Membrane</keyword>
<keyword id="KW-0547">Nucleotide-binding</keyword>
<keyword id="KW-0653">Protein transport</keyword>
<keyword id="KW-1185">Reference proteome</keyword>
<keyword id="KW-1278">Translocase</keyword>
<keyword id="KW-0811">Translocation</keyword>
<keyword id="KW-0813">Transport</keyword>
<reference key="1">
    <citation type="journal article" date="2007" name="Appl. Environ. Microbiol.">
        <title>Genome sequence of the cellulolytic gliding bacterium Cytophaga hutchinsonii.</title>
        <authorList>
            <person name="Xie G."/>
            <person name="Bruce D.C."/>
            <person name="Challacombe J.F."/>
            <person name="Chertkov O."/>
            <person name="Detter J.C."/>
            <person name="Gilna P."/>
            <person name="Han C.S."/>
            <person name="Lucas S."/>
            <person name="Misra M."/>
            <person name="Myers G.L."/>
            <person name="Richardson P."/>
            <person name="Tapia R."/>
            <person name="Thayer N."/>
            <person name="Thompson L.S."/>
            <person name="Brettin T.S."/>
            <person name="Henrissat B."/>
            <person name="Wilson D.B."/>
            <person name="McBride M.J."/>
        </authorList>
    </citation>
    <scope>NUCLEOTIDE SEQUENCE [LARGE SCALE GENOMIC DNA]</scope>
    <source>
        <strain>ATCC 33406 / DSM 1761 / JCM 20678 / CIP 103989 / IAM 12607 / NBRC 15051 / NCIMB 9469 / D465</strain>
    </source>
</reference>
<accession>Q11YU5</accession>
<name>SECA_CYTH3</name>